<dbReference type="EMBL" id="AB004538">
    <property type="protein sequence ID" value="BAA21445.1"/>
    <property type="status" value="ALT_SEQ"/>
    <property type="molecule type" value="Genomic_DNA"/>
</dbReference>
<dbReference type="EMBL" id="AB004538">
    <property type="protein sequence ID" value="BAA21446.1"/>
    <property type="status" value="ALT_SEQ"/>
    <property type="molecule type" value="Genomic_DNA"/>
</dbReference>
<dbReference type="EMBL" id="CU329671">
    <property type="protein sequence ID" value="CAA16908.2"/>
    <property type="molecule type" value="Genomic_DNA"/>
</dbReference>
<dbReference type="PIR" id="T40037">
    <property type="entry name" value="T40037"/>
</dbReference>
<dbReference type="RefSeq" id="NP_595546.2">
    <property type="nucleotide sequence ID" value="NM_001021457.3"/>
</dbReference>
<dbReference type="SMR" id="O13656"/>
<dbReference type="FunCoup" id="O13656">
    <property type="interactions" value="250"/>
</dbReference>
<dbReference type="STRING" id="284812.O13656"/>
<dbReference type="PaxDb" id="4896-SPBC27B12.13.1"/>
<dbReference type="EnsemblFungi" id="SPBC27B12.13.1">
    <property type="protein sequence ID" value="SPBC27B12.13.1:pep"/>
    <property type="gene ID" value="SPBC27B12.13"/>
</dbReference>
<dbReference type="GeneID" id="2540506"/>
<dbReference type="KEGG" id="spo:2540506"/>
<dbReference type="PomBase" id="SPBC27B12.13">
    <property type="gene designation" value="tom40"/>
</dbReference>
<dbReference type="VEuPathDB" id="FungiDB:SPBC27B12.13"/>
<dbReference type="eggNOG" id="KOG3296">
    <property type="taxonomic scope" value="Eukaryota"/>
</dbReference>
<dbReference type="HOGENOM" id="CLU_042174_0_0_1"/>
<dbReference type="InParanoid" id="O13656"/>
<dbReference type="OMA" id="TRFNYRW"/>
<dbReference type="PhylomeDB" id="O13656"/>
<dbReference type="PRO" id="PR:O13656"/>
<dbReference type="Proteomes" id="UP000002485">
    <property type="component" value="Chromosome II"/>
</dbReference>
<dbReference type="GO" id="GO:0005742">
    <property type="term" value="C:mitochondrial outer membrane translocase complex"/>
    <property type="evidence" value="ECO:0000318"/>
    <property type="project" value="GO_Central"/>
</dbReference>
<dbReference type="GO" id="GO:0005739">
    <property type="term" value="C:mitochondrion"/>
    <property type="evidence" value="ECO:0007005"/>
    <property type="project" value="PomBase"/>
</dbReference>
<dbReference type="GO" id="GO:0046930">
    <property type="term" value="C:pore complex"/>
    <property type="evidence" value="ECO:0007669"/>
    <property type="project" value="UniProtKB-KW"/>
</dbReference>
<dbReference type="GO" id="GO:0016887">
    <property type="term" value="F:ATP hydrolysis activity"/>
    <property type="evidence" value="ECO:0000305"/>
    <property type="project" value="PomBase"/>
</dbReference>
<dbReference type="GO" id="GO:0015288">
    <property type="term" value="F:porin activity"/>
    <property type="evidence" value="ECO:0007669"/>
    <property type="project" value="UniProtKB-KW"/>
</dbReference>
<dbReference type="GO" id="GO:0008320">
    <property type="term" value="F:protein transmembrane transporter activity"/>
    <property type="evidence" value="ECO:0000318"/>
    <property type="project" value="GO_Central"/>
</dbReference>
<dbReference type="GO" id="GO:0015450">
    <property type="term" value="F:protein-transporting ATPase activity"/>
    <property type="evidence" value="ECO:0000250"/>
    <property type="project" value="PomBase"/>
</dbReference>
<dbReference type="GO" id="GO:0006811">
    <property type="term" value="P:monoatomic ion transport"/>
    <property type="evidence" value="ECO:0007669"/>
    <property type="project" value="UniProtKB-KW"/>
</dbReference>
<dbReference type="GO" id="GO:0030150">
    <property type="term" value="P:protein import into mitochondrial matrix"/>
    <property type="evidence" value="ECO:0000250"/>
    <property type="project" value="PomBase"/>
</dbReference>
<dbReference type="GO" id="GO:0045039">
    <property type="term" value="P:protein insertion into mitochondrial inner membrane"/>
    <property type="evidence" value="ECO:0000250"/>
    <property type="project" value="PomBase"/>
</dbReference>
<dbReference type="CDD" id="cd07305">
    <property type="entry name" value="Porin3_Tom40"/>
    <property type="match status" value="1"/>
</dbReference>
<dbReference type="FunFam" id="2.40.160.10:FF:000009">
    <property type="entry name" value="Mitochondrial import receptor subunit TOM40"/>
    <property type="match status" value="1"/>
</dbReference>
<dbReference type="Gene3D" id="2.40.160.10">
    <property type="entry name" value="Porin"/>
    <property type="match status" value="1"/>
</dbReference>
<dbReference type="InterPro" id="IPR023614">
    <property type="entry name" value="Porin_dom_sf"/>
</dbReference>
<dbReference type="InterPro" id="IPR027246">
    <property type="entry name" value="Porin_Euk/Tom40"/>
</dbReference>
<dbReference type="InterPro" id="IPR037930">
    <property type="entry name" value="Tom40"/>
</dbReference>
<dbReference type="InterPro" id="IPR005686">
    <property type="entry name" value="Tom40_fungi"/>
</dbReference>
<dbReference type="NCBIfam" id="TIGR00989">
    <property type="entry name" value="3a0801s07tom40"/>
    <property type="match status" value="1"/>
</dbReference>
<dbReference type="PANTHER" id="PTHR10802">
    <property type="entry name" value="MITOCHONDRIAL IMPORT RECEPTOR SUBUNIT TOM40"/>
    <property type="match status" value="1"/>
</dbReference>
<dbReference type="Pfam" id="PF01459">
    <property type="entry name" value="Porin_3"/>
    <property type="match status" value="1"/>
</dbReference>
<reference key="1">
    <citation type="journal article" date="2000" name="Yeast">
        <title>A 38 kb segment containing the cdc2 gene from the left arm of fission yeast chromosome II: sequence analysis and characterization of the genomic DNA and cDNAs encoded on the segment.</title>
        <authorList>
            <person name="Machida M."/>
            <person name="Yamazaki S."/>
            <person name="Kunihiro S."/>
            <person name="Tanaka T."/>
            <person name="Kushida N."/>
            <person name="Jinno K."/>
            <person name="Haikawa Y."/>
            <person name="Yamazaki J."/>
            <person name="Yamamoto S."/>
            <person name="Sekine M."/>
            <person name="Oguchi A."/>
            <person name="Nagai Y."/>
            <person name="Sakai M."/>
            <person name="Aoki K."/>
            <person name="Ogura K."/>
            <person name="Kudoh Y."/>
            <person name="Kikuchi H."/>
            <person name="Zhang M.Q."/>
            <person name="Yanagida M."/>
        </authorList>
    </citation>
    <scope>NUCLEOTIDE SEQUENCE [LARGE SCALE GENOMIC DNA]</scope>
    <source>
        <strain>972 / ATCC 24843</strain>
    </source>
</reference>
<reference key="2">
    <citation type="journal article" date="2002" name="Nature">
        <title>The genome sequence of Schizosaccharomyces pombe.</title>
        <authorList>
            <person name="Wood V."/>
            <person name="Gwilliam R."/>
            <person name="Rajandream M.A."/>
            <person name="Lyne M.H."/>
            <person name="Lyne R."/>
            <person name="Stewart A."/>
            <person name="Sgouros J.G."/>
            <person name="Peat N."/>
            <person name="Hayles J."/>
            <person name="Baker S.G."/>
            <person name="Basham D."/>
            <person name="Bowman S."/>
            <person name="Brooks K."/>
            <person name="Brown D."/>
            <person name="Brown S."/>
            <person name="Chillingworth T."/>
            <person name="Churcher C.M."/>
            <person name="Collins M."/>
            <person name="Connor R."/>
            <person name="Cronin A."/>
            <person name="Davis P."/>
            <person name="Feltwell T."/>
            <person name="Fraser A."/>
            <person name="Gentles S."/>
            <person name="Goble A."/>
            <person name="Hamlin N."/>
            <person name="Harris D.E."/>
            <person name="Hidalgo J."/>
            <person name="Hodgson G."/>
            <person name="Holroyd S."/>
            <person name="Hornsby T."/>
            <person name="Howarth S."/>
            <person name="Huckle E.J."/>
            <person name="Hunt S."/>
            <person name="Jagels K."/>
            <person name="James K.D."/>
            <person name="Jones L."/>
            <person name="Jones M."/>
            <person name="Leather S."/>
            <person name="McDonald S."/>
            <person name="McLean J."/>
            <person name="Mooney P."/>
            <person name="Moule S."/>
            <person name="Mungall K.L."/>
            <person name="Murphy L.D."/>
            <person name="Niblett D."/>
            <person name="Odell C."/>
            <person name="Oliver K."/>
            <person name="O'Neil S."/>
            <person name="Pearson D."/>
            <person name="Quail M.A."/>
            <person name="Rabbinowitsch E."/>
            <person name="Rutherford K.M."/>
            <person name="Rutter S."/>
            <person name="Saunders D."/>
            <person name="Seeger K."/>
            <person name="Sharp S."/>
            <person name="Skelton J."/>
            <person name="Simmonds M.N."/>
            <person name="Squares R."/>
            <person name="Squares S."/>
            <person name="Stevens K."/>
            <person name="Taylor K."/>
            <person name="Taylor R.G."/>
            <person name="Tivey A."/>
            <person name="Walsh S.V."/>
            <person name="Warren T."/>
            <person name="Whitehead S."/>
            <person name="Woodward J.R."/>
            <person name="Volckaert G."/>
            <person name="Aert R."/>
            <person name="Robben J."/>
            <person name="Grymonprez B."/>
            <person name="Weltjens I."/>
            <person name="Vanstreels E."/>
            <person name="Rieger M."/>
            <person name="Schaefer M."/>
            <person name="Mueller-Auer S."/>
            <person name="Gabel C."/>
            <person name="Fuchs M."/>
            <person name="Duesterhoeft A."/>
            <person name="Fritzc C."/>
            <person name="Holzer E."/>
            <person name="Moestl D."/>
            <person name="Hilbert H."/>
            <person name="Borzym K."/>
            <person name="Langer I."/>
            <person name="Beck A."/>
            <person name="Lehrach H."/>
            <person name="Reinhardt R."/>
            <person name="Pohl T.M."/>
            <person name="Eger P."/>
            <person name="Zimmermann W."/>
            <person name="Wedler H."/>
            <person name="Wambutt R."/>
            <person name="Purnelle B."/>
            <person name="Goffeau A."/>
            <person name="Cadieu E."/>
            <person name="Dreano S."/>
            <person name="Gloux S."/>
            <person name="Lelaure V."/>
            <person name="Mottier S."/>
            <person name="Galibert F."/>
            <person name="Aves S.J."/>
            <person name="Xiang Z."/>
            <person name="Hunt C."/>
            <person name="Moore K."/>
            <person name="Hurst S.M."/>
            <person name="Lucas M."/>
            <person name="Rochet M."/>
            <person name="Gaillardin C."/>
            <person name="Tallada V.A."/>
            <person name="Garzon A."/>
            <person name="Thode G."/>
            <person name="Daga R.R."/>
            <person name="Cruzado L."/>
            <person name="Jimenez J."/>
            <person name="Sanchez M."/>
            <person name="del Rey F."/>
            <person name="Benito J."/>
            <person name="Dominguez A."/>
            <person name="Revuelta J.L."/>
            <person name="Moreno S."/>
            <person name="Armstrong J."/>
            <person name="Forsburg S.L."/>
            <person name="Cerutti L."/>
            <person name="Lowe T."/>
            <person name="McCombie W.R."/>
            <person name="Paulsen I."/>
            <person name="Potashkin J."/>
            <person name="Shpakovski G.V."/>
            <person name="Ussery D."/>
            <person name="Barrell B.G."/>
            <person name="Nurse P."/>
        </authorList>
    </citation>
    <scope>NUCLEOTIDE SEQUENCE [LARGE SCALE GENOMIC DNA]</scope>
    <source>
        <strain>972 / ATCC 24843</strain>
    </source>
</reference>
<proteinExistence type="inferred from homology"/>
<accession>O13656</accession>
<accession>O13655</accession>
<accession>Q7Z979</accession>
<accession>Q9URU0</accession>
<gene>
    <name type="primary">tom40</name>
    <name type="ORF">SPBC27B12.13</name>
    <name type="ORF">SPBC8D2.22</name>
</gene>
<evidence type="ECO:0000250" key="1"/>
<evidence type="ECO:0000305" key="2"/>
<keyword id="KW-0406">Ion transport</keyword>
<keyword id="KW-0472">Membrane</keyword>
<keyword id="KW-0496">Mitochondrion</keyword>
<keyword id="KW-1000">Mitochondrion outer membrane</keyword>
<keyword id="KW-0626">Porin</keyword>
<keyword id="KW-0653">Protein transport</keyword>
<keyword id="KW-1185">Reference proteome</keyword>
<keyword id="KW-0812">Transmembrane</keyword>
<keyword id="KW-1134">Transmembrane beta strand</keyword>
<keyword id="KW-0813">Transport</keyword>
<organism>
    <name type="scientific">Schizosaccharomyces pombe (strain 972 / ATCC 24843)</name>
    <name type="common">Fission yeast</name>
    <dbReference type="NCBI Taxonomy" id="284812"/>
    <lineage>
        <taxon>Eukaryota</taxon>
        <taxon>Fungi</taxon>
        <taxon>Dikarya</taxon>
        <taxon>Ascomycota</taxon>
        <taxon>Taphrinomycotina</taxon>
        <taxon>Schizosaccharomycetes</taxon>
        <taxon>Schizosaccharomycetales</taxon>
        <taxon>Schizosaccharomycetaceae</taxon>
        <taxon>Schizosaccharomyces</taxon>
    </lineage>
</organism>
<sequence>MDYIQTLFTSVNQVGEKIDSYKSSLNLINPGTCENLSKEVSKDILLSNYAFTGVRADVTKGFCTSPWFTVSHAFALGSQVLPPYSFSTMFGGEPLFLRGSVDNDGAVQAMLNCTWNSNVLSKVQMQLSNGAVPNMCQIEHDHKGKDFSFSFKAMNPWYEEKLTGIYIISLLQSVTPKLSLGVEALWQKPSSSIGPEEATLSYMTRYNAADWIATAHLNGSQGDVTATFWRKLSPKVEAGVECQLSPVGLNHSAALMTGPKPEGLTSVGVKYEFAQSIYRGQVDSKGRVGVYLERRLAPAITLAFSSELDHPNRNAKVGLGLSLELPGSDEMIQQQQQQLAAQTA</sequence>
<feature type="chain" id="PRO_0000051534" description="Probable mitochondrial import receptor subunit tom40">
    <location>
        <begin position="1"/>
        <end position="344"/>
    </location>
</feature>
<protein>
    <recommendedName>
        <fullName>Probable mitochondrial import receptor subunit tom40</fullName>
    </recommendedName>
    <alternativeName>
        <fullName>Translocase of outer membrane 40 kDa subunit</fullName>
    </alternativeName>
</protein>
<name>TOM40_SCHPO</name>
<comment type="function">
    <text evidence="1">Channel-forming protein essential for import of protein precursors into mitochondria.</text>
</comment>
<comment type="subunit">
    <text>Forms part of the preprotein translocase complex of the outer mitochondrial membrane (TOM complex) which consists of at least 8 different proteins (tom5, tom6, tom7, tom20, tom22, tom37, tom40 and tom70). Interacts with mitochondrial targeting sequences.</text>
</comment>
<comment type="subcellular location">
    <subcellularLocation>
        <location evidence="1">Mitochondrion outer membrane</location>
        <topology evidence="1">Multi-pass membrane protein</topology>
    </subcellularLocation>
</comment>
<comment type="similarity">
    <text evidence="2">Belongs to the Tom40 family.</text>
</comment>
<comment type="sequence caution" evidence="2">
    <conflict type="erroneous termination">
        <sequence resource="EMBL-CDS" id="BAA21445"/>
    </conflict>
    <text>Truncated C-terminus.</text>
</comment>
<comment type="sequence caution" evidence="2">
    <conflict type="erroneous termination">
        <sequence resource="EMBL-CDS" id="BAA21446"/>
    </conflict>
    <text>Truncated C-terminus.</text>
</comment>